<reference key="1">
    <citation type="journal article" date="2000" name="Science">
        <title>The genome sequence of Drosophila melanogaster.</title>
        <authorList>
            <person name="Adams M.D."/>
            <person name="Celniker S.E."/>
            <person name="Holt R.A."/>
            <person name="Evans C.A."/>
            <person name="Gocayne J.D."/>
            <person name="Amanatides P.G."/>
            <person name="Scherer S.E."/>
            <person name="Li P.W."/>
            <person name="Hoskins R.A."/>
            <person name="Galle R.F."/>
            <person name="George R.A."/>
            <person name="Lewis S.E."/>
            <person name="Richards S."/>
            <person name="Ashburner M."/>
            <person name="Henderson S.N."/>
            <person name="Sutton G.G."/>
            <person name="Wortman J.R."/>
            <person name="Yandell M.D."/>
            <person name="Zhang Q."/>
            <person name="Chen L.X."/>
            <person name="Brandon R.C."/>
            <person name="Rogers Y.-H.C."/>
            <person name="Blazej R.G."/>
            <person name="Champe M."/>
            <person name="Pfeiffer B.D."/>
            <person name="Wan K.H."/>
            <person name="Doyle C."/>
            <person name="Baxter E.G."/>
            <person name="Helt G."/>
            <person name="Nelson C.R."/>
            <person name="Miklos G.L.G."/>
            <person name="Abril J.F."/>
            <person name="Agbayani A."/>
            <person name="An H.-J."/>
            <person name="Andrews-Pfannkoch C."/>
            <person name="Baldwin D."/>
            <person name="Ballew R.M."/>
            <person name="Basu A."/>
            <person name="Baxendale J."/>
            <person name="Bayraktaroglu L."/>
            <person name="Beasley E.M."/>
            <person name="Beeson K.Y."/>
            <person name="Benos P.V."/>
            <person name="Berman B.P."/>
            <person name="Bhandari D."/>
            <person name="Bolshakov S."/>
            <person name="Borkova D."/>
            <person name="Botchan M.R."/>
            <person name="Bouck J."/>
            <person name="Brokstein P."/>
            <person name="Brottier P."/>
            <person name="Burtis K.C."/>
            <person name="Busam D.A."/>
            <person name="Butler H."/>
            <person name="Cadieu E."/>
            <person name="Center A."/>
            <person name="Chandra I."/>
            <person name="Cherry J.M."/>
            <person name="Cawley S."/>
            <person name="Dahlke C."/>
            <person name="Davenport L.B."/>
            <person name="Davies P."/>
            <person name="de Pablos B."/>
            <person name="Delcher A."/>
            <person name="Deng Z."/>
            <person name="Mays A.D."/>
            <person name="Dew I."/>
            <person name="Dietz S.M."/>
            <person name="Dodson K."/>
            <person name="Doup L.E."/>
            <person name="Downes M."/>
            <person name="Dugan-Rocha S."/>
            <person name="Dunkov B.C."/>
            <person name="Dunn P."/>
            <person name="Durbin K.J."/>
            <person name="Evangelista C.C."/>
            <person name="Ferraz C."/>
            <person name="Ferriera S."/>
            <person name="Fleischmann W."/>
            <person name="Fosler C."/>
            <person name="Gabrielian A.E."/>
            <person name="Garg N.S."/>
            <person name="Gelbart W.M."/>
            <person name="Glasser K."/>
            <person name="Glodek A."/>
            <person name="Gong F."/>
            <person name="Gorrell J.H."/>
            <person name="Gu Z."/>
            <person name="Guan P."/>
            <person name="Harris M."/>
            <person name="Harris N.L."/>
            <person name="Harvey D.A."/>
            <person name="Heiman T.J."/>
            <person name="Hernandez J.R."/>
            <person name="Houck J."/>
            <person name="Hostin D."/>
            <person name="Houston K.A."/>
            <person name="Howland T.J."/>
            <person name="Wei M.-H."/>
            <person name="Ibegwam C."/>
            <person name="Jalali M."/>
            <person name="Kalush F."/>
            <person name="Karpen G.H."/>
            <person name="Ke Z."/>
            <person name="Kennison J.A."/>
            <person name="Ketchum K.A."/>
            <person name="Kimmel B.E."/>
            <person name="Kodira C.D."/>
            <person name="Kraft C.L."/>
            <person name="Kravitz S."/>
            <person name="Kulp D."/>
            <person name="Lai Z."/>
            <person name="Lasko P."/>
            <person name="Lei Y."/>
            <person name="Levitsky A.A."/>
            <person name="Li J.H."/>
            <person name="Li Z."/>
            <person name="Liang Y."/>
            <person name="Lin X."/>
            <person name="Liu X."/>
            <person name="Mattei B."/>
            <person name="McIntosh T.C."/>
            <person name="McLeod M.P."/>
            <person name="McPherson D."/>
            <person name="Merkulov G."/>
            <person name="Milshina N.V."/>
            <person name="Mobarry C."/>
            <person name="Morris J."/>
            <person name="Moshrefi A."/>
            <person name="Mount S.M."/>
            <person name="Moy M."/>
            <person name="Murphy B."/>
            <person name="Murphy L."/>
            <person name="Muzny D.M."/>
            <person name="Nelson D.L."/>
            <person name="Nelson D.R."/>
            <person name="Nelson K.A."/>
            <person name="Nixon K."/>
            <person name="Nusskern D.R."/>
            <person name="Pacleb J.M."/>
            <person name="Palazzolo M."/>
            <person name="Pittman G.S."/>
            <person name="Pan S."/>
            <person name="Pollard J."/>
            <person name="Puri V."/>
            <person name="Reese M.G."/>
            <person name="Reinert K."/>
            <person name="Remington K."/>
            <person name="Saunders R.D.C."/>
            <person name="Scheeler F."/>
            <person name="Shen H."/>
            <person name="Shue B.C."/>
            <person name="Siden-Kiamos I."/>
            <person name="Simpson M."/>
            <person name="Skupski M.P."/>
            <person name="Smith T.J."/>
            <person name="Spier E."/>
            <person name="Spradling A.C."/>
            <person name="Stapleton M."/>
            <person name="Strong R."/>
            <person name="Sun E."/>
            <person name="Svirskas R."/>
            <person name="Tector C."/>
            <person name="Turner R."/>
            <person name="Venter E."/>
            <person name="Wang A.H."/>
            <person name="Wang X."/>
            <person name="Wang Z.-Y."/>
            <person name="Wassarman D.A."/>
            <person name="Weinstock G.M."/>
            <person name="Weissenbach J."/>
            <person name="Williams S.M."/>
            <person name="Woodage T."/>
            <person name="Worley K.C."/>
            <person name="Wu D."/>
            <person name="Yang S."/>
            <person name="Yao Q.A."/>
            <person name="Ye J."/>
            <person name="Yeh R.-F."/>
            <person name="Zaveri J.S."/>
            <person name="Zhan M."/>
            <person name="Zhang G."/>
            <person name="Zhao Q."/>
            <person name="Zheng L."/>
            <person name="Zheng X.H."/>
            <person name="Zhong F.N."/>
            <person name="Zhong W."/>
            <person name="Zhou X."/>
            <person name="Zhu S.C."/>
            <person name="Zhu X."/>
            <person name="Smith H.O."/>
            <person name="Gibbs R.A."/>
            <person name="Myers E.W."/>
            <person name="Rubin G.M."/>
            <person name="Venter J.C."/>
        </authorList>
    </citation>
    <scope>NUCLEOTIDE SEQUENCE [LARGE SCALE GENOMIC DNA]</scope>
    <source>
        <strain>Berkeley</strain>
    </source>
</reference>
<reference key="2">
    <citation type="journal article" date="2002" name="Genome Biol.">
        <title>Annotation of the Drosophila melanogaster euchromatic genome: a systematic review.</title>
        <authorList>
            <person name="Misra S."/>
            <person name="Crosby M.A."/>
            <person name="Mungall C.J."/>
            <person name="Matthews B.B."/>
            <person name="Campbell K.S."/>
            <person name="Hradecky P."/>
            <person name="Huang Y."/>
            <person name="Kaminker J.S."/>
            <person name="Millburn G.H."/>
            <person name="Prochnik S.E."/>
            <person name="Smith C.D."/>
            <person name="Tupy J.L."/>
            <person name="Whitfield E.J."/>
            <person name="Bayraktaroglu L."/>
            <person name="Berman B.P."/>
            <person name="Bettencourt B.R."/>
            <person name="Celniker S.E."/>
            <person name="de Grey A.D.N.J."/>
            <person name="Drysdale R.A."/>
            <person name="Harris N.L."/>
            <person name="Richter J."/>
            <person name="Russo S."/>
            <person name="Schroeder A.J."/>
            <person name="Shu S.Q."/>
            <person name="Stapleton M."/>
            <person name="Yamada C."/>
            <person name="Ashburner M."/>
            <person name="Gelbart W.M."/>
            <person name="Rubin G.M."/>
            <person name="Lewis S.E."/>
        </authorList>
    </citation>
    <scope>GENOME REANNOTATION</scope>
    <source>
        <strain>Berkeley</strain>
    </source>
</reference>
<reference key="3">
    <citation type="journal article" date="2002" name="Genome Biol.">
        <title>A Drosophila full-length cDNA resource.</title>
        <authorList>
            <person name="Stapleton M."/>
            <person name="Carlson J.W."/>
            <person name="Brokstein P."/>
            <person name="Yu C."/>
            <person name="Champe M."/>
            <person name="George R.A."/>
            <person name="Guarin H."/>
            <person name="Kronmiller B."/>
            <person name="Pacleb J.M."/>
            <person name="Park S."/>
            <person name="Wan K.H."/>
            <person name="Rubin G.M."/>
            <person name="Celniker S.E."/>
        </authorList>
    </citation>
    <scope>NUCLEOTIDE SEQUENCE [LARGE SCALE MRNA]</scope>
    <source>
        <strain>Berkeley</strain>
        <tissue>Embryo</tissue>
    </source>
</reference>
<reference key="4">
    <citation type="journal article" date="2005" name="Development">
        <title>The ubiquitin ligase Drosophila Mind bomb promotes Notch signaling by regulating the localization and activity of Serrate and Delta.</title>
        <authorList>
            <person name="Lai E.C."/>
            <person name="Roegiers F."/>
            <person name="Qin X."/>
            <person name="Jan Y.N."/>
            <person name="Rubin G.M."/>
        </authorList>
    </citation>
    <scope>FUNCTION</scope>
    <scope>SUBCELLULAR LOCATION</scope>
    <scope>INTERACTION WITH DL AND SER</scope>
    <scope>TISSUE SPECIFICITY</scope>
</reference>
<reference key="5">
    <citation type="journal article" date="2005" name="PLoS Biol.">
        <title>Two distinct E3 ubiquitin ligases have complementary functions in the regulation of delta and serrate signaling in Drosophila.</title>
        <authorList>
            <person name="Le Borgne R."/>
            <person name="Remaud S."/>
            <person name="Hamel S."/>
            <person name="Schweisguth F."/>
        </authorList>
    </citation>
    <scope>FUNCTION</scope>
    <scope>SUBCELLULAR LOCATION</scope>
    <scope>TISSUE SPECIFICITY</scope>
    <scope>MUTAGENESIS OF VAL-457</scope>
</reference>
<name>MIB_DROME</name>
<sequence length="1226" mass="129872">MSCAATLSSAKDSTNANASGGGGGGGGGGAPTNSNTNTNTNTQSTAVGVVVSSAAGTGVGVGGGGGGGGSLPGGTTSSSSASAAGGVAAGGGGNSAAALVRRFSMEGVGARVIRGPDWKWNKQDGGEGHVGTVRNFESAEEVVVVWDNGTAANYRCAGAYDLRILDSAPTGVKHEGTMCDTCRQQPIFGIRWKCAECINYDLCSICYHGDKHHLRHRFYRITTPGGERTMLEPRRKSKKVLARGIFPGARVVRGVDWQWEDQDGGVGRRGKVNEIQDWSSASPRSAAYVIWDNGSKNLYRVGFEGMADLKVVNDAKGSNVYRDHLPLLGENGPGKGPHGFQIGDKVTVDLDLEIVQSLQHGHGGWTDGMFECLSNAGMVVGIDEDHDIVVAYNSGNRWTFNPAVLTKVSSPTTAPPEFQVGDIVKICSDVESIKILQRGHGEWADAMQLTLGKIGRVQQVYHDNDLKVEVGNTSWTYNPLAVCKVASSTASDGSCAPVIPSSERLSAILKKLFEPNVSGDATEEFVKAAANGFAARCEEYLAGAAQPSTSSASPSSGPDVNVNGVFAGHTALQAASQNGHIEVIQVLLRHAVDVEIEDKDGDRAVHHAAFGDEAAVIEILAKAGADLNARNKRRQTSLHIAVNKGHLNVVKTLLTLGCHPSLQDSEGDTPLHDAISKEHDEMLSLLLDFGADITLNNNNGFNALHHAALKGNPSAMKILLTKTNRPWIVEEKKDDGYTALHLAALNNHVEIAELLVHMGKANMDRQNVNLQTALHLAVERQHVQIVKLLVQDGADLNIPDKDGDTPLHEALRHHTLSQLKQLQDVEGFGKLLMGLRNANNKKASASIACFLAANGADLTLKNRKQQTPLDLCPDPNLCKTLVKCYNERKTDDSELPGNVAGTSSSARARAASGSLNQSSSVNMPLSSLAASSTFPAASSSSIFALNGIANEMSQSLHEDPPKSSASLDECLVCSDAKRDTVFKPCGHVSCCETCAPRVKKCLICRETVSSREKIDECLVCSDRRAAVFFRPCGHMVACEHCSALMKKCVLCRTQIDEILSFSLCCGGSGRPEKVSVAAGAMATVGLPLPDDRFMEAAAAAACANASGHSVAMNNTVVTPVAGSSNQLNSQNNLLAAAAASSNVSNLSAAGNAMVAPSNVNNFQMDDVQKLKQQLQDIKEQTMCPVCFDRIKNMVFLCGHGTCQMCGDQIEGCPICRKTVEKRILLF</sequence>
<evidence type="ECO:0000255" key="1"/>
<evidence type="ECO:0000255" key="2">
    <source>
        <dbReference type="PROSITE-ProRule" id="PRU00175"/>
    </source>
</evidence>
<evidence type="ECO:0000255" key="3">
    <source>
        <dbReference type="PROSITE-ProRule" id="PRU00228"/>
    </source>
</evidence>
<evidence type="ECO:0000255" key="4">
    <source>
        <dbReference type="PROSITE-ProRule" id="PRU00749"/>
    </source>
</evidence>
<evidence type="ECO:0000256" key="5">
    <source>
        <dbReference type="SAM" id="MobiDB-lite"/>
    </source>
</evidence>
<evidence type="ECO:0000269" key="6">
    <source>
    </source>
</evidence>
<evidence type="ECO:0000269" key="7">
    <source>
    </source>
</evidence>
<evidence type="ECO:0000305" key="8"/>
<gene>
    <name type="primary">mib1</name>
    <name type="synonym">mind-bomb</name>
    <name type="ORF">CG5841</name>
</gene>
<feature type="chain" id="PRO_0000055951" description="E3 ubiquitin-protein ligase mind-bomb">
    <location>
        <begin position="1"/>
        <end position="1226"/>
    </location>
</feature>
<feature type="domain" description="MIB/HERC2 1" evidence="4">
    <location>
        <begin position="100"/>
        <end position="168"/>
    </location>
</feature>
<feature type="domain" description="MIB/HERC2 2" evidence="4">
    <location>
        <begin position="237"/>
        <end position="315"/>
    </location>
</feature>
<feature type="repeat" description="ANK 1">
    <location>
        <begin position="567"/>
        <end position="596"/>
    </location>
</feature>
<feature type="repeat" description="ANK 2">
    <location>
        <begin position="600"/>
        <end position="629"/>
    </location>
</feature>
<feature type="repeat" description="ANK 3">
    <location>
        <begin position="633"/>
        <end position="662"/>
    </location>
</feature>
<feature type="repeat" description="ANK 4">
    <location>
        <begin position="666"/>
        <end position="695"/>
    </location>
</feature>
<feature type="repeat" description="ANK 5">
    <location>
        <begin position="699"/>
        <end position="731"/>
    </location>
</feature>
<feature type="repeat" description="ANK 6">
    <location>
        <begin position="735"/>
        <end position="765"/>
    </location>
</feature>
<feature type="repeat" description="ANK 7">
    <location>
        <begin position="769"/>
        <end position="798"/>
    </location>
</feature>
<feature type="repeat" description="ANK 8">
    <location>
        <begin position="802"/>
        <end position="833"/>
    </location>
</feature>
<feature type="zinc finger region" description="ZZ-type" evidence="3">
    <location>
        <begin position="174"/>
        <end position="226"/>
    </location>
</feature>
<feature type="zinc finger region" description="RING-type 1" evidence="2">
    <location>
        <begin position="970"/>
        <end position="1005"/>
    </location>
</feature>
<feature type="zinc finger region" description="RING-type 2" evidence="2">
    <location>
        <begin position="1017"/>
        <end position="1052"/>
    </location>
</feature>
<feature type="zinc finger region" description="RING-type 3" evidence="2">
    <location>
        <begin position="1183"/>
        <end position="1216"/>
    </location>
</feature>
<feature type="region of interest" description="Disordered" evidence="5">
    <location>
        <begin position="1"/>
        <end position="42"/>
    </location>
</feature>
<feature type="region of interest" description="Disordered" evidence="5">
    <location>
        <begin position="66"/>
        <end position="87"/>
    </location>
</feature>
<feature type="region of interest" description="Disordered" evidence="5">
    <location>
        <begin position="890"/>
        <end position="919"/>
    </location>
</feature>
<feature type="coiled-coil region" evidence="1">
    <location>
        <begin position="1159"/>
        <end position="1181"/>
    </location>
</feature>
<feature type="compositionally biased region" description="Polar residues" evidence="5">
    <location>
        <begin position="1"/>
        <end position="12"/>
    </location>
</feature>
<feature type="compositionally biased region" description="Gly residues" evidence="5">
    <location>
        <begin position="19"/>
        <end position="30"/>
    </location>
</feature>
<feature type="compositionally biased region" description="Low complexity" evidence="5">
    <location>
        <begin position="31"/>
        <end position="42"/>
    </location>
</feature>
<feature type="compositionally biased region" description="Low complexity" evidence="5">
    <location>
        <begin position="73"/>
        <end position="86"/>
    </location>
</feature>
<feature type="compositionally biased region" description="Low complexity" evidence="5">
    <location>
        <begin position="900"/>
        <end position="914"/>
    </location>
</feature>
<feature type="binding site" evidence="3">
    <location>
        <position position="179"/>
    </location>
    <ligand>
        <name>Zn(2+)</name>
        <dbReference type="ChEBI" id="CHEBI:29105"/>
        <label>1</label>
    </ligand>
</feature>
<feature type="binding site" evidence="3">
    <location>
        <position position="182"/>
    </location>
    <ligand>
        <name>Zn(2+)</name>
        <dbReference type="ChEBI" id="CHEBI:29105"/>
        <label>1</label>
    </ligand>
</feature>
<feature type="binding site" evidence="3">
    <location>
        <position position="194"/>
    </location>
    <ligand>
        <name>Zn(2+)</name>
        <dbReference type="ChEBI" id="CHEBI:29105"/>
        <label>2</label>
    </ligand>
</feature>
<feature type="binding site" evidence="3">
    <location>
        <position position="197"/>
    </location>
    <ligand>
        <name>Zn(2+)</name>
        <dbReference type="ChEBI" id="CHEBI:29105"/>
        <label>2</label>
    </ligand>
</feature>
<feature type="binding site" evidence="3">
    <location>
        <position position="203"/>
    </location>
    <ligand>
        <name>Zn(2+)</name>
        <dbReference type="ChEBI" id="CHEBI:29105"/>
        <label>1</label>
    </ligand>
</feature>
<feature type="binding site" evidence="3">
    <location>
        <position position="206"/>
    </location>
    <ligand>
        <name>Zn(2+)</name>
        <dbReference type="ChEBI" id="CHEBI:29105"/>
        <label>1</label>
    </ligand>
</feature>
<feature type="binding site" evidence="3">
    <location>
        <position position="212"/>
    </location>
    <ligand>
        <name>Zn(2+)</name>
        <dbReference type="ChEBI" id="CHEBI:29105"/>
        <label>2</label>
    </ligand>
</feature>
<feature type="binding site" evidence="3">
    <location>
        <position position="216"/>
    </location>
    <ligand>
        <name>Zn(2+)</name>
        <dbReference type="ChEBI" id="CHEBI:29105"/>
        <label>2</label>
    </ligand>
</feature>
<feature type="mutagenesis site" description="In D-mib4; induces defects in Notch signaling." evidence="6">
    <original>V</original>
    <variation>M</variation>
    <location>
        <position position="457"/>
    </location>
</feature>
<protein>
    <recommendedName>
        <fullName>E3 ubiquitin-protein ligase mind-bomb</fullName>
        <ecNumber>2.3.2.27</ecNumber>
    </recommendedName>
    <alternativeName>
        <fullName>Mind bomb homolog</fullName>
        <shortName>D-mib</shortName>
    </alternativeName>
    <alternativeName>
        <fullName evidence="8">RING-type E3 ubiquitin transferase mind-bomb</fullName>
    </alternativeName>
</protein>
<proteinExistence type="evidence at protein level"/>
<organism>
    <name type="scientific">Drosophila melanogaster</name>
    <name type="common">Fruit fly</name>
    <dbReference type="NCBI Taxonomy" id="7227"/>
    <lineage>
        <taxon>Eukaryota</taxon>
        <taxon>Metazoa</taxon>
        <taxon>Ecdysozoa</taxon>
        <taxon>Arthropoda</taxon>
        <taxon>Hexapoda</taxon>
        <taxon>Insecta</taxon>
        <taxon>Pterygota</taxon>
        <taxon>Neoptera</taxon>
        <taxon>Endopterygota</taxon>
        <taxon>Diptera</taxon>
        <taxon>Brachycera</taxon>
        <taxon>Muscomorpha</taxon>
        <taxon>Ephydroidea</taxon>
        <taxon>Drosophilidae</taxon>
        <taxon>Drosophila</taxon>
        <taxon>Sophophora</taxon>
    </lineage>
</organism>
<dbReference type="EC" id="2.3.2.27"/>
<dbReference type="EMBL" id="AE014296">
    <property type="protein sequence ID" value="AAF49551.3"/>
    <property type="molecule type" value="Genomic_DNA"/>
</dbReference>
<dbReference type="EMBL" id="AY118647">
    <property type="protein sequence ID" value="AAM50016.1"/>
    <property type="molecule type" value="mRNA"/>
</dbReference>
<dbReference type="RefSeq" id="NP_648826.2">
    <property type="nucleotide sequence ID" value="NM_140569.2"/>
</dbReference>
<dbReference type="SMR" id="Q9VUX2"/>
<dbReference type="BioGRID" id="65061">
    <property type="interactions" value="7"/>
</dbReference>
<dbReference type="FunCoup" id="Q9VUX2">
    <property type="interactions" value="1424"/>
</dbReference>
<dbReference type="IntAct" id="Q9VUX2">
    <property type="interactions" value="2"/>
</dbReference>
<dbReference type="STRING" id="7227.FBpp0075275"/>
<dbReference type="PaxDb" id="7227-FBpp0075275"/>
<dbReference type="DNASU" id="39750"/>
<dbReference type="EnsemblMetazoa" id="FBtr0075520">
    <property type="protein sequence ID" value="FBpp0075275"/>
    <property type="gene ID" value="FBgn0263601"/>
</dbReference>
<dbReference type="GeneID" id="39750"/>
<dbReference type="KEGG" id="dme:Dmel_CG5841"/>
<dbReference type="AGR" id="FB:FBgn0263601"/>
<dbReference type="CTD" id="57534"/>
<dbReference type="FlyBase" id="FBgn0263601">
    <property type="gene designation" value="mib1"/>
</dbReference>
<dbReference type="VEuPathDB" id="VectorBase:FBgn0263601"/>
<dbReference type="eggNOG" id="KOG0504">
    <property type="taxonomic scope" value="Eukaryota"/>
</dbReference>
<dbReference type="eggNOG" id="KOG4582">
    <property type="taxonomic scope" value="Eukaryota"/>
</dbReference>
<dbReference type="GeneTree" id="ENSGT00940000156781"/>
<dbReference type="InParanoid" id="Q9VUX2"/>
<dbReference type="OMA" id="FFKPCGH"/>
<dbReference type="OrthoDB" id="2122982at2759"/>
<dbReference type="PhylomeDB" id="Q9VUX2"/>
<dbReference type="SignaLink" id="Q9VUX2"/>
<dbReference type="UniPathway" id="UPA00143"/>
<dbReference type="BioGRID-ORCS" id="39750">
    <property type="hits" value="0 hits in 1 CRISPR screen"/>
</dbReference>
<dbReference type="ChiTaRS" id="mib1">
    <property type="organism name" value="fly"/>
</dbReference>
<dbReference type="GenomeRNAi" id="39750"/>
<dbReference type="PRO" id="PR:Q9VUX2"/>
<dbReference type="Proteomes" id="UP000000803">
    <property type="component" value="Chromosome 3L"/>
</dbReference>
<dbReference type="Bgee" id="FBgn0263601">
    <property type="expression patterns" value="Expressed in capitellum (Drosophila) and 100 other cell types or tissues"/>
</dbReference>
<dbReference type="ExpressionAtlas" id="Q9VUX2">
    <property type="expression patterns" value="baseline and differential"/>
</dbReference>
<dbReference type="GO" id="GO:0045179">
    <property type="term" value="C:apical cortex"/>
    <property type="evidence" value="ECO:0000314"/>
    <property type="project" value="UniProtKB"/>
</dbReference>
<dbReference type="GO" id="GO:0005737">
    <property type="term" value="C:cytoplasm"/>
    <property type="evidence" value="ECO:0000314"/>
    <property type="project" value="UniProtKB"/>
</dbReference>
<dbReference type="GO" id="GO:0005829">
    <property type="term" value="C:cytosol"/>
    <property type="evidence" value="ECO:0000304"/>
    <property type="project" value="Reactome"/>
</dbReference>
<dbReference type="GO" id="GO:0061630">
    <property type="term" value="F:ubiquitin protein ligase activity"/>
    <property type="evidence" value="ECO:0000314"/>
    <property type="project" value="FlyBase"/>
</dbReference>
<dbReference type="GO" id="GO:0004842">
    <property type="term" value="F:ubiquitin-protein transferase activity"/>
    <property type="evidence" value="ECO:0000304"/>
    <property type="project" value="Reactome"/>
</dbReference>
<dbReference type="GO" id="GO:0008270">
    <property type="term" value="F:zinc ion binding"/>
    <property type="evidence" value="ECO:0000255"/>
    <property type="project" value="FlyBase"/>
</dbReference>
<dbReference type="GO" id="GO:0006897">
    <property type="term" value="P:endocytosis"/>
    <property type="evidence" value="ECO:0000315"/>
    <property type="project" value="UniProtKB"/>
</dbReference>
<dbReference type="GO" id="GO:0046331">
    <property type="term" value="P:lateral inhibition"/>
    <property type="evidence" value="ECO:0000315"/>
    <property type="project" value="FlyBase"/>
</dbReference>
<dbReference type="GO" id="GO:0007219">
    <property type="term" value="P:Notch signaling pathway"/>
    <property type="evidence" value="ECO:0000318"/>
    <property type="project" value="GO_Central"/>
</dbReference>
<dbReference type="GO" id="GO:0045807">
    <property type="term" value="P:positive regulation of endocytosis"/>
    <property type="evidence" value="ECO:0000315"/>
    <property type="project" value="FlyBase"/>
</dbReference>
<dbReference type="GO" id="GO:0045747">
    <property type="term" value="P:positive regulation of Notch signaling pathway"/>
    <property type="evidence" value="ECO:0000315"/>
    <property type="project" value="UniProtKB"/>
</dbReference>
<dbReference type="GO" id="GO:0008104">
    <property type="term" value="P:protein localization"/>
    <property type="evidence" value="ECO:0000315"/>
    <property type="project" value="UniProtKB"/>
</dbReference>
<dbReference type="GO" id="GO:0000209">
    <property type="term" value="P:protein polyubiquitination"/>
    <property type="evidence" value="ECO:0000314"/>
    <property type="project" value="FlyBase"/>
</dbReference>
<dbReference type="GO" id="GO:0016567">
    <property type="term" value="P:protein ubiquitination"/>
    <property type="evidence" value="ECO:0000318"/>
    <property type="project" value="GO_Central"/>
</dbReference>
<dbReference type="GO" id="GO:0008593">
    <property type="term" value="P:regulation of Notch signaling pathway"/>
    <property type="evidence" value="ECO:0000315"/>
    <property type="project" value="UniProtKB"/>
</dbReference>
<dbReference type="GO" id="GO:0007423">
    <property type="term" value="P:sensory organ development"/>
    <property type="evidence" value="ECO:0000315"/>
    <property type="project" value="FlyBase"/>
</dbReference>
<dbReference type="CDD" id="cd16724">
    <property type="entry name" value="RING-HC_MIB1_rpt1"/>
    <property type="match status" value="1"/>
</dbReference>
<dbReference type="CDD" id="cd16725">
    <property type="entry name" value="RING-HC_MIB1_rpt2"/>
    <property type="match status" value="1"/>
</dbReference>
<dbReference type="CDD" id="cd16727">
    <property type="entry name" value="RING-HC_MIB1_rpt3"/>
    <property type="match status" value="1"/>
</dbReference>
<dbReference type="CDD" id="cd02339">
    <property type="entry name" value="ZZ_Mind_bomb"/>
    <property type="match status" value="1"/>
</dbReference>
<dbReference type="FunFam" id="2.30.30.40:FF:000090">
    <property type="entry name" value="E3 ubiquitin-protein ligase MIB1 isoform X1"/>
    <property type="match status" value="1"/>
</dbReference>
<dbReference type="FunFam" id="3.30.40.10:FF:000083">
    <property type="entry name" value="E3 ubiquitin-protein ligase MIB1 isoform X1"/>
    <property type="match status" value="1"/>
</dbReference>
<dbReference type="FunFam" id="1.25.40.20:FF:000247">
    <property type="entry name" value="E3 ubiquitin-protein ligase mind-bomb"/>
    <property type="match status" value="1"/>
</dbReference>
<dbReference type="FunFam" id="1.25.40.20:FF:000259">
    <property type="entry name" value="E3 ubiquitin-protein ligase mind-bomb"/>
    <property type="match status" value="1"/>
</dbReference>
<dbReference type="FunFam" id="1.25.40.20:FF:000422">
    <property type="entry name" value="E3 ubiquitin-protein ligase mind-bomb"/>
    <property type="match status" value="1"/>
</dbReference>
<dbReference type="FunFam" id="3.30.40.10:FF:000690">
    <property type="entry name" value="Mind bomb"/>
    <property type="match status" value="1"/>
</dbReference>
<dbReference type="FunFam" id="3.30.60.90:FF:000005">
    <property type="entry name" value="Putative E3 ubiquitin-protein ligase mib1"/>
    <property type="match status" value="1"/>
</dbReference>
<dbReference type="FunFam" id="2.30.30.40:FF:000054">
    <property type="entry name" value="Putative e3 ubiquitin-protein ligase mind-bomb"/>
    <property type="match status" value="1"/>
</dbReference>
<dbReference type="Gene3D" id="3.30.60.90">
    <property type="match status" value="1"/>
</dbReference>
<dbReference type="Gene3D" id="1.25.40.20">
    <property type="entry name" value="Ankyrin repeat-containing domain"/>
    <property type="match status" value="3"/>
</dbReference>
<dbReference type="Gene3D" id="2.30.30.40">
    <property type="entry name" value="SH3 Domains"/>
    <property type="match status" value="2"/>
</dbReference>
<dbReference type="Gene3D" id="3.30.40.10">
    <property type="entry name" value="Zinc/RING finger domain, C3HC4 (zinc finger)"/>
    <property type="match status" value="3"/>
</dbReference>
<dbReference type="InterPro" id="IPR002110">
    <property type="entry name" value="Ankyrin_rpt"/>
</dbReference>
<dbReference type="InterPro" id="IPR036770">
    <property type="entry name" value="Ankyrin_rpt-contain_sf"/>
</dbReference>
<dbReference type="InterPro" id="IPR042056">
    <property type="entry name" value="MIB1/2_ZZ"/>
</dbReference>
<dbReference type="InterPro" id="IPR010606">
    <property type="entry name" value="Mib_Herc2"/>
</dbReference>
<dbReference type="InterPro" id="IPR037252">
    <property type="entry name" value="Mib_Herc2_sf"/>
</dbReference>
<dbReference type="InterPro" id="IPR040847">
    <property type="entry name" value="SH3_15"/>
</dbReference>
<dbReference type="InterPro" id="IPR001841">
    <property type="entry name" value="Znf_RING"/>
</dbReference>
<dbReference type="InterPro" id="IPR013083">
    <property type="entry name" value="Znf_RING/FYVE/PHD"/>
</dbReference>
<dbReference type="InterPro" id="IPR000433">
    <property type="entry name" value="Znf_ZZ"/>
</dbReference>
<dbReference type="InterPro" id="IPR043145">
    <property type="entry name" value="Znf_ZZ_sf"/>
</dbReference>
<dbReference type="PANTHER" id="PTHR24202:SF53">
    <property type="entry name" value="E3 UBIQUITIN-PROTEIN LIGASE MIB1"/>
    <property type="match status" value="1"/>
</dbReference>
<dbReference type="PANTHER" id="PTHR24202">
    <property type="entry name" value="E3 UBIQUITIN-PROTEIN LIGASE MIB2"/>
    <property type="match status" value="1"/>
</dbReference>
<dbReference type="Pfam" id="PF00023">
    <property type="entry name" value="Ank"/>
    <property type="match status" value="2"/>
</dbReference>
<dbReference type="Pfam" id="PF12796">
    <property type="entry name" value="Ank_2"/>
    <property type="match status" value="1"/>
</dbReference>
<dbReference type="Pfam" id="PF13857">
    <property type="entry name" value="Ank_5"/>
    <property type="match status" value="1"/>
</dbReference>
<dbReference type="Pfam" id="PF06701">
    <property type="entry name" value="MIB_HERC2"/>
    <property type="match status" value="2"/>
</dbReference>
<dbReference type="Pfam" id="PF18346">
    <property type="entry name" value="SH3_15"/>
    <property type="match status" value="2"/>
</dbReference>
<dbReference type="Pfam" id="PF13920">
    <property type="entry name" value="zf-C3HC4_3"/>
    <property type="match status" value="3"/>
</dbReference>
<dbReference type="Pfam" id="PF00569">
    <property type="entry name" value="ZZ"/>
    <property type="match status" value="1"/>
</dbReference>
<dbReference type="PRINTS" id="PR01415">
    <property type="entry name" value="ANKYRIN"/>
</dbReference>
<dbReference type="SMART" id="SM00248">
    <property type="entry name" value="ANK"/>
    <property type="match status" value="8"/>
</dbReference>
<dbReference type="SMART" id="SM00184">
    <property type="entry name" value="RING"/>
    <property type="match status" value="3"/>
</dbReference>
<dbReference type="SMART" id="SM00291">
    <property type="entry name" value="ZnF_ZZ"/>
    <property type="match status" value="1"/>
</dbReference>
<dbReference type="SUPFAM" id="SSF48403">
    <property type="entry name" value="Ankyrin repeat"/>
    <property type="match status" value="1"/>
</dbReference>
<dbReference type="SUPFAM" id="SSF159034">
    <property type="entry name" value="Mib/herc2 domain-like"/>
    <property type="match status" value="2"/>
</dbReference>
<dbReference type="SUPFAM" id="SSF57850">
    <property type="entry name" value="RING/U-box"/>
    <property type="match status" value="2"/>
</dbReference>
<dbReference type="PROSITE" id="PS50297">
    <property type="entry name" value="ANK_REP_REGION"/>
    <property type="match status" value="1"/>
</dbReference>
<dbReference type="PROSITE" id="PS50088">
    <property type="entry name" value="ANK_REPEAT"/>
    <property type="match status" value="6"/>
</dbReference>
<dbReference type="PROSITE" id="PS51416">
    <property type="entry name" value="MIB_HERC2"/>
    <property type="match status" value="2"/>
</dbReference>
<dbReference type="PROSITE" id="PS50089">
    <property type="entry name" value="ZF_RING_2"/>
    <property type="match status" value="3"/>
</dbReference>
<dbReference type="PROSITE" id="PS01357">
    <property type="entry name" value="ZF_ZZ_1"/>
    <property type="match status" value="1"/>
</dbReference>
<dbReference type="PROSITE" id="PS50135">
    <property type="entry name" value="ZF_ZZ_2"/>
    <property type="match status" value="1"/>
</dbReference>
<accession>Q9VUX2</accession>
<accession>Q8MSR3</accession>
<keyword id="KW-0040">ANK repeat</keyword>
<keyword id="KW-0175">Coiled coil</keyword>
<keyword id="KW-0963">Cytoplasm</keyword>
<keyword id="KW-0479">Metal-binding</keyword>
<keyword id="KW-0914">Notch signaling pathway</keyword>
<keyword id="KW-1185">Reference proteome</keyword>
<keyword id="KW-0677">Repeat</keyword>
<keyword id="KW-0808">Transferase</keyword>
<keyword id="KW-0833">Ubl conjugation pathway</keyword>
<keyword id="KW-0862">Zinc</keyword>
<keyword id="KW-0863">Zinc-finger</keyword>
<comment type="function">
    <text evidence="6 7">E3 ubiquitin-protein ligase that mediates ubiquitination of Delta (Dl) and Serrate (Ser) receptors, which act as ligands of Notch proteins. Positively regulates the Notch signaling by ubiquitinating the intracellular domain of Dl and Ser, leading to endocytosis of Dl and Ser receptors. Regulates a subset of Notch signaling events, including wing margin specification, leg segmentation and vein determination, that are distinct from those events requiring neuralize (neur) activity. Also modulates lateral inhibition, a neur- and Dl-dependent signaling event, suggesting a distinct but partially complementary function with neur.</text>
</comment>
<comment type="catalytic activity">
    <reaction>
        <text>S-ubiquitinyl-[E2 ubiquitin-conjugating enzyme]-L-cysteine + [acceptor protein]-L-lysine = [E2 ubiquitin-conjugating enzyme]-L-cysteine + N(6)-ubiquitinyl-[acceptor protein]-L-lysine.</text>
        <dbReference type="EC" id="2.3.2.27"/>
    </reaction>
</comment>
<comment type="pathway">
    <text>Protein modification; protein ubiquitination.</text>
</comment>
<comment type="subunit">
    <text evidence="7">Interacts with intracellular domain of Dl and Ser.</text>
</comment>
<comment type="subcellular location">
    <subcellularLocation>
        <location evidence="6 7">Cytoplasm</location>
        <location evidence="6 7">Cell cortex</location>
    </subcellularLocation>
    <text>Localizes at the apical cortex of cells.</text>
</comment>
<comment type="tissue specificity">
    <text evidence="6 7">Ubiquitous in the wing imaginal disk (at protein level).</text>
</comment>